<protein>
    <recommendedName>
        <fullName evidence="1">N-succinylglutamate 5-semialdehyde dehydrogenase</fullName>
        <ecNumber evidence="1">1.2.1.71</ecNumber>
    </recommendedName>
    <alternativeName>
        <fullName evidence="1">Succinylglutamic semialdehyde dehydrogenase</fullName>
        <shortName evidence="1">SGSD</shortName>
    </alternativeName>
</protein>
<evidence type="ECO:0000255" key="1">
    <source>
        <dbReference type="HAMAP-Rule" id="MF_01174"/>
    </source>
</evidence>
<keyword id="KW-0056">Arginine metabolism</keyword>
<keyword id="KW-0520">NAD</keyword>
<keyword id="KW-0560">Oxidoreductase</keyword>
<dbReference type="EC" id="1.2.1.71" evidence="1"/>
<dbReference type="EMBL" id="CP000886">
    <property type="protein sequence ID" value="ABX67425.1"/>
    <property type="molecule type" value="Genomic_DNA"/>
</dbReference>
<dbReference type="RefSeq" id="WP_000177260.1">
    <property type="nucleotide sequence ID" value="NC_010102.1"/>
</dbReference>
<dbReference type="SMR" id="A9N276"/>
<dbReference type="KEGG" id="spq:SPAB_02038"/>
<dbReference type="PATRIC" id="fig|1016998.12.peg.1926"/>
<dbReference type="HOGENOM" id="CLU_005391_1_0_6"/>
<dbReference type="BioCyc" id="SENT1016998:SPAB_RS08320-MONOMER"/>
<dbReference type="UniPathway" id="UPA00185">
    <property type="reaction ID" value="UER00282"/>
</dbReference>
<dbReference type="Proteomes" id="UP000008556">
    <property type="component" value="Chromosome"/>
</dbReference>
<dbReference type="GO" id="GO:0043824">
    <property type="term" value="F:succinylglutamate-semialdehyde dehydrogenase activity"/>
    <property type="evidence" value="ECO:0007669"/>
    <property type="project" value="UniProtKB-EC"/>
</dbReference>
<dbReference type="GO" id="GO:0019544">
    <property type="term" value="P:arginine catabolic process to glutamate"/>
    <property type="evidence" value="ECO:0007669"/>
    <property type="project" value="UniProtKB-UniRule"/>
</dbReference>
<dbReference type="GO" id="GO:0019545">
    <property type="term" value="P:arginine catabolic process to succinate"/>
    <property type="evidence" value="ECO:0007669"/>
    <property type="project" value="UniProtKB-UniRule"/>
</dbReference>
<dbReference type="CDD" id="cd07095">
    <property type="entry name" value="ALDH_SGSD_AstD"/>
    <property type="match status" value="1"/>
</dbReference>
<dbReference type="FunFam" id="3.40.309.10:FF:000013">
    <property type="entry name" value="N-succinylglutamate 5-semialdehyde dehydrogenase"/>
    <property type="match status" value="1"/>
</dbReference>
<dbReference type="FunFam" id="3.40.605.10:FF:000010">
    <property type="entry name" value="N-succinylglutamate 5-semialdehyde dehydrogenase"/>
    <property type="match status" value="1"/>
</dbReference>
<dbReference type="Gene3D" id="3.40.605.10">
    <property type="entry name" value="Aldehyde Dehydrogenase, Chain A, domain 1"/>
    <property type="match status" value="1"/>
</dbReference>
<dbReference type="Gene3D" id="3.40.309.10">
    <property type="entry name" value="Aldehyde Dehydrogenase, Chain A, domain 2"/>
    <property type="match status" value="1"/>
</dbReference>
<dbReference type="HAMAP" id="MF_01174">
    <property type="entry name" value="Aldedh_AstD"/>
    <property type="match status" value="1"/>
</dbReference>
<dbReference type="InterPro" id="IPR016161">
    <property type="entry name" value="Ald_DH/histidinol_DH"/>
</dbReference>
<dbReference type="InterPro" id="IPR016163">
    <property type="entry name" value="Ald_DH_C"/>
</dbReference>
<dbReference type="InterPro" id="IPR016160">
    <property type="entry name" value="Ald_DH_CS_CYS"/>
</dbReference>
<dbReference type="InterPro" id="IPR029510">
    <property type="entry name" value="Ald_DH_CS_GLU"/>
</dbReference>
<dbReference type="InterPro" id="IPR016162">
    <property type="entry name" value="Ald_DH_N"/>
</dbReference>
<dbReference type="InterPro" id="IPR015590">
    <property type="entry name" value="Aldehyde_DH_dom"/>
</dbReference>
<dbReference type="InterPro" id="IPR017649">
    <property type="entry name" value="SuccinylGlu_semiald_DH_AstD"/>
</dbReference>
<dbReference type="NCBIfam" id="TIGR03240">
    <property type="entry name" value="arg_catab_astD"/>
    <property type="match status" value="1"/>
</dbReference>
<dbReference type="NCBIfam" id="NF006992">
    <property type="entry name" value="PRK09457.1"/>
    <property type="match status" value="1"/>
</dbReference>
<dbReference type="PANTHER" id="PTHR11699">
    <property type="entry name" value="ALDEHYDE DEHYDROGENASE-RELATED"/>
    <property type="match status" value="1"/>
</dbReference>
<dbReference type="Pfam" id="PF00171">
    <property type="entry name" value="Aldedh"/>
    <property type="match status" value="1"/>
</dbReference>
<dbReference type="SUPFAM" id="SSF53720">
    <property type="entry name" value="ALDH-like"/>
    <property type="match status" value="1"/>
</dbReference>
<dbReference type="PROSITE" id="PS00070">
    <property type="entry name" value="ALDEHYDE_DEHYDR_CYS"/>
    <property type="match status" value="1"/>
</dbReference>
<dbReference type="PROSITE" id="PS00687">
    <property type="entry name" value="ALDEHYDE_DEHYDR_GLU"/>
    <property type="match status" value="1"/>
</dbReference>
<reference key="1">
    <citation type="submission" date="2007-11" db="EMBL/GenBank/DDBJ databases">
        <authorList>
            <consortium name="The Salmonella enterica serovar Paratyphi B Genome Sequencing Project"/>
            <person name="McClelland M."/>
            <person name="Sanderson E.K."/>
            <person name="Porwollik S."/>
            <person name="Spieth J."/>
            <person name="Clifton W.S."/>
            <person name="Fulton R."/>
            <person name="Cordes M."/>
            <person name="Wollam A."/>
            <person name="Shah N."/>
            <person name="Pepin K."/>
            <person name="Bhonagiri V."/>
            <person name="Nash W."/>
            <person name="Johnson M."/>
            <person name="Thiruvilangam P."/>
            <person name="Wilson R."/>
        </authorList>
    </citation>
    <scope>NUCLEOTIDE SEQUENCE [LARGE SCALE GENOMIC DNA]</scope>
    <source>
        <strain>ATCC BAA-1250 / SPB7</strain>
    </source>
</reference>
<proteinExistence type="inferred from homology"/>
<comment type="function">
    <text evidence="1">Catalyzes the NAD-dependent reduction of succinylglutamate semialdehyde into succinylglutamate.</text>
</comment>
<comment type="catalytic activity">
    <reaction evidence="1">
        <text>N-succinyl-L-glutamate 5-semialdehyde + NAD(+) + H2O = N-succinyl-L-glutamate + NADH + 2 H(+)</text>
        <dbReference type="Rhea" id="RHEA:10812"/>
        <dbReference type="ChEBI" id="CHEBI:15377"/>
        <dbReference type="ChEBI" id="CHEBI:15378"/>
        <dbReference type="ChEBI" id="CHEBI:57540"/>
        <dbReference type="ChEBI" id="CHEBI:57945"/>
        <dbReference type="ChEBI" id="CHEBI:58520"/>
        <dbReference type="ChEBI" id="CHEBI:58763"/>
        <dbReference type="EC" id="1.2.1.71"/>
    </reaction>
</comment>
<comment type="pathway">
    <text evidence="1">Amino-acid degradation; L-arginine degradation via AST pathway; L-glutamate and succinate from L-arginine: step 4/5.</text>
</comment>
<comment type="similarity">
    <text evidence="1">Belongs to the aldehyde dehydrogenase family. AstD subfamily.</text>
</comment>
<feature type="chain" id="PRO_1000085405" description="N-succinylglutamate 5-semialdehyde dehydrogenase">
    <location>
        <begin position="1"/>
        <end position="492"/>
    </location>
</feature>
<feature type="active site" evidence="1">
    <location>
        <position position="243"/>
    </location>
</feature>
<feature type="active site" evidence="1">
    <location>
        <position position="277"/>
    </location>
</feature>
<feature type="binding site" evidence="1">
    <location>
        <begin position="220"/>
        <end position="225"/>
    </location>
    <ligand>
        <name>NAD(+)</name>
        <dbReference type="ChEBI" id="CHEBI:57540"/>
    </ligand>
</feature>
<organism>
    <name type="scientific">Salmonella paratyphi B (strain ATCC BAA-1250 / SPB7)</name>
    <dbReference type="NCBI Taxonomy" id="1016998"/>
    <lineage>
        <taxon>Bacteria</taxon>
        <taxon>Pseudomonadati</taxon>
        <taxon>Pseudomonadota</taxon>
        <taxon>Gammaproteobacteria</taxon>
        <taxon>Enterobacterales</taxon>
        <taxon>Enterobacteriaceae</taxon>
        <taxon>Salmonella</taxon>
    </lineage>
</organism>
<name>ASTD_SALPB</name>
<sequence length="492" mass="52992">MTLWINGDWITGQGERRRKTNPVSAEILWQGNDANAAQVAEACQAARAAFPCWARQPFAARQAIVEKFAALLEAHKADLTEVIARETGKPRWEAATEVTAMINKIAISIKAYHARTGAQKSELVDGAATLRHRPHGVLAVFGPYNFPGHLPNGHIVPALLAGNTLIFKPSELTPWTGETVIKLWERAGLPAGVLNLVQGGRETGQALSSLDDLDGLLFTGSASTGYQLHRQLSGQPEKILALEMGGNNPLIIEDVANIDAAVHLTLQSAFITAGQRCTCARRLLVKQGAQGDAFLARLVDIAGRLQPGRWDDDPQPFIGGLISAQAAQHVMEAWRQREALGGRTLLAPRKVKEGTSLLTPGIIELTGVADVPDEEVFGPLLNVWRYAHFDEAIRLANNTRFGLSCGLVSTDRAQFEQLLLEARAGIVNWNKPLTGAASTAPFGGVGASGNHRPSAWYAADYCAWPMASLESPELTLPATLSPGLDFSRREAV</sequence>
<gene>
    <name evidence="1" type="primary">astD</name>
    <name type="ordered locus">SPAB_02038</name>
</gene>
<accession>A9N276</accession>